<evidence type="ECO:0000255" key="1">
    <source>
        <dbReference type="HAMAP-Rule" id="MF_00107"/>
    </source>
</evidence>
<sequence>MRIGHGFDVHAFGGEGPIIIGGVRIPYEKGLLAHSDGDVALHALTDALLGAAALGDIGKLFPDTDPAFKGADSRELLREAWRRIQAKGYTLGNVDVTIIAQAPKMLPHIPQMRVFIAEDLGCHMDDVNVKATTTEKLGFTGRGEGIACEAVALLIKATK</sequence>
<protein>
    <recommendedName>
        <fullName evidence="1">2-C-methyl-D-erythritol 2,4-cyclodiphosphate synthase</fullName>
        <shortName evidence="1">MECDP-synthase</shortName>
        <shortName evidence="1">MECPP-synthase</shortName>
        <shortName evidence="1">MECPS</shortName>
        <ecNumber evidence="1">4.6.1.12</ecNumber>
    </recommendedName>
</protein>
<keyword id="KW-0414">Isoprene biosynthesis</keyword>
<keyword id="KW-0456">Lyase</keyword>
<keyword id="KW-0479">Metal-binding</keyword>
<comment type="function">
    <text evidence="1">Involved in the biosynthesis of isopentenyl diphosphate (IPP) and dimethylallyl diphosphate (DMAPP), two major building blocks of isoprenoid compounds. Catalyzes the conversion of 4-diphosphocytidyl-2-C-methyl-D-erythritol 2-phosphate (CDP-ME2P) to 2-C-methyl-D-erythritol 2,4-cyclodiphosphate (ME-CPP) with a corresponding release of cytidine 5-monophosphate (CMP).</text>
</comment>
<comment type="catalytic activity">
    <reaction evidence="1">
        <text>4-CDP-2-C-methyl-D-erythritol 2-phosphate = 2-C-methyl-D-erythritol 2,4-cyclic diphosphate + CMP</text>
        <dbReference type="Rhea" id="RHEA:23864"/>
        <dbReference type="ChEBI" id="CHEBI:57919"/>
        <dbReference type="ChEBI" id="CHEBI:58483"/>
        <dbReference type="ChEBI" id="CHEBI:60377"/>
        <dbReference type="EC" id="4.6.1.12"/>
    </reaction>
</comment>
<comment type="cofactor">
    <cofactor evidence="1">
        <name>a divalent metal cation</name>
        <dbReference type="ChEBI" id="CHEBI:60240"/>
    </cofactor>
    <text evidence="1">Binds 1 divalent metal cation per subunit.</text>
</comment>
<comment type="pathway">
    <text evidence="1">Isoprenoid biosynthesis; isopentenyl diphosphate biosynthesis via DXP pathway; isopentenyl diphosphate from 1-deoxy-D-xylulose 5-phosphate: step 4/6.</text>
</comment>
<comment type="subunit">
    <text evidence="1">Homotrimer.</text>
</comment>
<comment type="similarity">
    <text evidence="1">Belongs to the IspF family.</text>
</comment>
<feature type="chain" id="PRO_1000117430" description="2-C-methyl-D-erythritol 2,4-cyclodiphosphate synthase">
    <location>
        <begin position="1"/>
        <end position="159"/>
    </location>
</feature>
<feature type="binding site" evidence="1">
    <location>
        <begin position="8"/>
        <end position="10"/>
    </location>
    <ligand>
        <name>4-CDP-2-C-methyl-D-erythritol 2-phosphate</name>
        <dbReference type="ChEBI" id="CHEBI:57919"/>
    </ligand>
</feature>
<feature type="binding site" evidence="1">
    <location>
        <position position="8"/>
    </location>
    <ligand>
        <name>a divalent metal cation</name>
        <dbReference type="ChEBI" id="CHEBI:60240"/>
    </ligand>
</feature>
<feature type="binding site" evidence="1">
    <location>
        <position position="10"/>
    </location>
    <ligand>
        <name>a divalent metal cation</name>
        <dbReference type="ChEBI" id="CHEBI:60240"/>
    </ligand>
</feature>
<feature type="binding site" evidence="1">
    <location>
        <begin position="34"/>
        <end position="35"/>
    </location>
    <ligand>
        <name>4-CDP-2-C-methyl-D-erythritol 2-phosphate</name>
        <dbReference type="ChEBI" id="CHEBI:57919"/>
    </ligand>
</feature>
<feature type="binding site" evidence="1">
    <location>
        <position position="42"/>
    </location>
    <ligand>
        <name>a divalent metal cation</name>
        <dbReference type="ChEBI" id="CHEBI:60240"/>
    </ligand>
</feature>
<feature type="binding site" evidence="1">
    <location>
        <begin position="56"/>
        <end position="58"/>
    </location>
    <ligand>
        <name>4-CDP-2-C-methyl-D-erythritol 2-phosphate</name>
        <dbReference type="ChEBI" id="CHEBI:57919"/>
    </ligand>
</feature>
<feature type="binding site" evidence="1">
    <location>
        <begin position="61"/>
        <end position="65"/>
    </location>
    <ligand>
        <name>4-CDP-2-C-methyl-D-erythritol 2-phosphate</name>
        <dbReference type="ChEBI" id="CHEBI:57919"/>
    </ligand>
</feature>
<feature type="binding site" evidence="1">
    <location>
        <begin position="100"/>
        <end position="106"/>
    </location>
    <ligand>
        <name>4-CDP-2-C-methyl-D-erythritol 2-phosphate</name>
        <dbReference type="ChEBI" id="CHEBI:57919"/>
    </ligand>
</feature>
<feature type="binding site" evidence="1">
    <location>
        <begin position="132"/>
        <end position="135"/>
    </location>
    <ligand>
        <name>4-CDP-2-C-methyl-D-erythritol 2-phosphate</name>
        <dbReference type="ChEBI" id="CHEBI:57919"/>
    </ligand>
</feature>
<feature type="binding site" evidence="1">
    <location>
        <position position="139"/>
    </location>
    <ligand>
        <name>4-CDP-2-C-methyl-D-erythritol 2-phosphate</name>
        <dbReference type="ChEBI" id="CHEBI:57919"/>
    </ligand>
</feature>
<feature type="binding site" evidence="1">
    <location>
        <position position="142"/>
    </location>
    <ligand>
        <name>4-CDP-2-C-methyl-D-erythritol 2-phosphate</name>
        <dbReference type="ChEBI" id="CHEBI:57919"/>
    </ligand>
</feature>
<feature type="site" description="Transition state stabilizer" evidence="1">
    <location>
        <position position="34"/>
    </location>
</feature>
<feature type="site" description="Transition state stabilizer" evidence="1">
    <location>
        <position position="133"/>
    </location>
</feature>
<organism>
    <name type="scientific">Escherichia fergusonii (strain ATCC 35469 / DSM 13698 / CCUG 18766 / IAM 14443 / JCM 21226 / LMG 7866 / NBRC 102419 / NCTC 12128 / CDC 0568-73)</name>
    <dbReference type="NCBI Taxonomy" id="585054"/>
    <lineage>
        <taxon>Bacteria</taxon>
        <taxon>Pseudomonadati</taxon>
        <taxon>Pseudomonadota</taxon>
        <taxon>Gammaproteobacteria</taxon>
        <taxon>Enterobacterales</taxon>
        <taxon>Enterobacteriaceae</taxon>
        <taxon>Escherichia</taxon>
    </lineage>
</organism>
<reference key="1">
    <citation type="journal article" date="2009" name="PLoS Genet.">
        <title>Organised genome dynamics in the Escherichia coli species results in highly diverse adaptive paths.</title>
        <authorList>
            <person name="Touchon M."/>
            <person name="Hoede C."/>
            <person name="Tenaillon O."/>
            <person name="Barbe V."/>
            <person name="Baeriswyl S."/>
            <person name="Bidet P."/>
            <person name="Bingen E."/>
            <person name="Bonacorsi S."/>
            <person name="Bouchier C."/>
            <person name="Bouvet O."/>
            <person name="Calteau A."/>
            <person name="Chiapello H."/>
            <person name="Clermont O."/>
            <person name="Cruveiller S."/>
            <person name="Danchin A."/>
            <person name="Diard M."/>
            <person name="Dossat C."/>
            <person name="Karoui M.E."/>
            <person name="Frapy E."/>
            <person name="Garry L."/>
            <person name="Ghigo J.M."/>
            <person name="Gilles A.M."/>
            <person name="Johnson J."/>
            <person name="Le Bouguenec C."/>
            <person name="Lescat M."/>
            <person name="Mangenot S."/>
            <person name="Martinez-Jehanne V."/>
            <person name="Matic I."/>
            <person name="Nassif X."/>
            <person name="Oztas S."/>
            <person name="Petit M.A."/>
            <person name="Pichon C."/>
            <person name="Rouy Z."/>
            <person name="Ruf C.S."/>
            <person name="Schneider D."/>
            <person name="Tourret J."/>
            <person name="Vacherie B."/>
            <person name="Vallenet D."/>
            <person name="Medigue C."/>
            <person name="Rocha E.P.C."/>
            <person name="Denamur E."/>
        </authorList>
    </citation>
    <scope>NUCLEOTIDE SEQUENCE [LARGE SCALE GENOMIC DNA]</scope>
    <source>
        <strain>ATCC 35469 / DSM 13698 / BCRC 15582 / CCUG 18766 / IAM 14443 / JCM 21226 / LMG 7866 / NBRC 102419 / NCTC 12128 / CDC 0568-73</strain>
    </source>
</reference>
<accession>B7LWK9</accession>
<name>ISPF_ESCF3</name>
<dbReference type="EC" id="4.6.1.12" evidence="1"/>
<dbReference type="EMBL" id="CU928158">
    <property type="protein sequence ID" value="CAQ87885.1"/>
    <property type="molecule type" value="Genomic_DNA"/>
</dbReference>
<dbReference type="RefSeq" id="WP_001219242.1">
    <property type="nucleotide sequence ID" value="NC_011740.1"/>
</dbReference>
<dbReference type="SMR" id="B7LWK9"/>
<dbReference type="GeneID" id="93779260"/>
<dbReference type="KEGG" id="efe:EFER_0322"/>
<dbReference type="HOGENOM" id="CLU_084630_2_0_6"/>
<dbReference type="OrthoDB" id="9804336at2"/>
<dbReference type="UniPathway" id="UPA00056">
    <property type="reaction ID" value="UER00095"/>
</dbReference>
<dbReference type="Proteomes" id="UP000000745">
    <property type="component" value="Chromosome"/>
</dbReference>
<dbReference type="GO" id="GO:0008685">
    <property type="term" value="F:2-C-methyl-D-erythritol 2,4-cyclodiphosphate synthase activity"/>
    <property type="evidence" value="ECO:0007669"/>
    <property type="project" value="UniProtKB-UniRule"/>
</dbReference>
<dbReference type="GO" id="GO:0046872">
    <property type="term" value="F:metal ion binding"/>
    <property type="evidence" value="ECO:0007669"/>
    <property type="project" value="UniProtKB-KW"/>
</dbReference>
<dbReference type="GO" id="GO:0019288">
    <property type="term" value="P:isopentenyl diphosphate biosynthetic process, methylerythritol 4-phosphate pathway"/>
    <property type="evidence" value="ECO:0007669"/>
    <property type="project" value="UniProtKB-UniRule"/>
</dbReference>
<dbReference type="GO" id="GO:0016114">
    <property type="term" value="P:terpenoid biosynthetic process"/>
    <property type="evidence" value="ECO:0007669"/>
    <property type="project" value="InterPro"/>
</dbReference>
<dbReference type="CDD" id="cd00554">
    <property type="entry name" value="MECDP_synthase"/>
    <property type="match status" value="1"/>
</dbReference>
<dbReference type="FunFam" id="3.30.1330.50:FF:000001">
    <property type="entry name" value="2-C-methyl-D-erythritol 2,4-cyclodiphosphate synthase"/>
    <property type="match status" value="1"/>
</dbReference>
<dbReference type="Gene3D" id="3.30.1330.50">
    <property type="entry name" value="2-C-methyl-D-erythritol 2,4-cyclodiphosphate synthase"/>
    <property type="match status" value="1"/>
</dbReference>
<dbReference type="HAMAP" id="MF_00107">
    <property type="entry name" value="IspF"/>
    <property type="match status" value="1"/>
</dbReference>
<dbReference type="InterPro" id="IPR003526">
    <property type="entry name" value="MECDP_synthase"/>
</dbReference>
<dbReference type="InterPro" id="IPR020555">
    <property type="entry name" value="MECDP_synthase_CS"/>
</dbReference>
<dbReference type="InterPro" id="IPR036571">
    <property type="entry name" value="MECDP_synthase_sf"/>
</dbReference>
<dbReference type="NCBIfam" id="TIGR00151">
    <property type="entry name" value="ispF"/>
    <property type="match status" value="1"/>
</dbReference>
<dbReference type="PANTHER" id="PTHR43181">
    <property type="entry name" value="2-C-METHYL-D-ERYTHRITOL 2,4-CYCLODIPHOSPHATE SYNTHASE, CHLOROPLASTIC"/>
    <property type="match status" value="1"/>
</dbReference>
<dbReference type="PANTHER" id="PTHR43181:SF1">
    <property type="entry name" value="2-C-METHYL-D-ERYTHRITOL 2,4-CYCLODIPHOSPHATE SYNTHASE, CHLOROPLASTIC"/>
    <property type="match status" value="1"/>
</dbReference>
<dbReference type="Pfam" id="PF02542">
    <property type="entry name" value="YgbB"/>
    <property type="match status" value="1"/>
</dbReference>
<dbReference type="SUPFAM" id="SSF69765">
    <property type="entry name" value="IpsF-like"/>
    <property type="match status" value="1"/>
</dbReference>
<dbReference type="PROSITE" id="PS01350">
    <property type="entry name" value="ISPF"/>
    <property type="match status" value="1"/>
</dbReference>
<proteinExistence type="inferred from homology"/>
<gene>
    <name evidence="1" type="primary">ispF</name>
    <name type="ordered locus">EFER_0322</name>
</gene>